<proteinExistence type="inferred from homology"/>
<name>GLGC_STRR6</name>
<sequence>MKNEMLALILAGGQGTRLGKLTQSIAKPAVQFGGRYRIIDFALSNCANSGIHNVGVVTQYQPLALNNHIGNGSSWGLDGINSGVSILQPYSASEGNRWFEGTSHAIYQNIDYIDNVNPEYVLILSGDHIYKMDYDDMLQSHKDNNASLTVAVLDVPLKEASRFGIMNTDANNRIVEFEEKPAQPKSTKASMGIYIFDWQRLRNMLVAAEKSKVGMSDFGKNVIPNYLESGESVYAYEFSGYWKDVGTIESLWEANMEYISPENALDSRNRQWKIYSRNLISPPNFLGANAHVEDSLVVDGCFVDGTVKHSILSRGAQVREGAEVLDSVIMSGAIIGQGAKIKRAIIGEGAIISDGVEIDGTDEVQVVGYNEVVGVATDED</sequence>
<comment type="function">
    <text evidence="1">Involved in the biosynthesis of ADP-glucose, a building block required for the elongation reactions to produce glycogen. Catalyzes the reaction between ATP and alpha-D-glucose 1-phosphate (G1P) to produce pyrophosphate and ADP-Glc.</text>
</comment>
<comment type="catalytic activity">
    <reaction evidence="1">
        <text>alpha-D-glucose 1-phosphate + ATP + H(+) = ADP-alpha-D-glucose + diphosphate</text>
        <dbReference type="Rhea" id="RHEA:12120"/>
        <dbReference type="ChEBI" id="CHEBI:15378"/>
        <dbReference type="ChEBI" id="CHEBI:30616"/>
        <dbReference type="ChEBI" id="CHEBI:33019"/>
        <dbReference type="ChEBI" id="CHEBI:57498"/>
        <dbReference type="ChEBI" id="CHEBI:58601"/>
        <dbReference type="EC" id="2.7.7.27"/>
    </reaction>
</comment>
<comment type="pathway">
    <text evidence="1">Glycan biosynthesis; glycogen biosynthesis.</text>
</comment>
<comment type="subunit">
    <text evidence="1">Homotetramer.</text>
</comment>
<comment type="similarity">
    <text evidence="1">Belongs to the bacterial/plant glucose-1-phosphate adenylyltransferase family.</text>
</comment>
<gene>
    <name evidence="1" type="primary">glgC</name>
    <name type="ordered locus">spr1030</name>
</gene>
<feature type="chain" id="PRO_0000195336" description="Glucose-1-phosphate adenylyltransferase">
    <location>
        <begin position="1"/>
        <end position="380"/>
    </location>
</feature>
<feature type="binding site" evidence="1">
    <location>
        <position position="164"/>
    </location>
    <ligand>
        <name>alpha-D-glucose 1-phosphate</name>
        <dbReference type="ChEBI" id="CHEBI:58601"/>
    </ligand>
</feature>
<feature type="binding site" evidence="1">
    <location>
        <begin position="179"/>
        <end position="180"/>
    </location>
    <ligand>
        <name>alpha-D-glucose 1-phosphate</name>
        <dbReference type="ChEBI" id="CHEBI:58601"/>
    </ligand>
</feature>
<feature type="binding site" evidence="1">
    <location>
        <position position="190"/>
    </location>
    <ligand>
        <name>alpha-D-glucose 1-phosphate</name>
        <dbReference type="ChEBI" id="CHEBI:58601"/>
    </ligand>
</feature>
<dbReference type="EC" id="2.7.7.27" evidence="1"/>
<dbReference type="EMBL" id="AE007317">
    <property type="protein sequence ID" value="AAK99834.1"/>
    <property type="molecule type" value="Genomic_DNA"/>
</dbReference>
<dbReference type="PIR" id="F98000">
    <property type="entry name" value="F98000"/>
</dbReference>
<dbReference type="RefSeq" id="NP_358624.1">
    <property type="nucleotide sequence ID" value="NC_003098.1"/>
</dbReference>
<dbReference type="RefSeq" id="WP_000787267.1">
    <property type="nucleotide sequence ID" value="NC_003098.1"/>
</dbReference>
<dbReference type="SMR" id="Q8DPS5"/>
<dbReference type="STRING" id="171101.spr1030"/>
<dbReference type="KEGG" id="spr:spr1030"/>
<dbReference type="PATRIC" id="fig|171101.6.peg.1118"/>
<dbReference type="eggNOG" id="COG0448">
    <property type="taxonomic scope" value="Bacteria"/>
</dbReference>
<dbReference type="HOGENOM" id="CLU_029499_14_0_9"/>
<dbReference type="UniPathway" id="UPA00164"/>
<dbReference type="Proteomes" id="UP000000586">
    <property type="component" value="Chromosome"/>
</dbReference>
<dbReference type="GO" id="GO:0005524">
    <property type="term" value="F:ATP binding"/>
    <property type="evidence" value="ECO:0007669"/>
    <property type="project" value="UniProtKB-KW"/>
</dbReference>
<dbReference type="GO" id="GO:0008878">
    <property type="term" value="F:glucose-1-phosphate adenylyltransferase activity"/>
    <property type="evidence" value="ECO:0007669"/>
    <property type="project" value="UniProtKB-UniRule"/>
</dbReference>
<dbReference type="GO" id="GO:0005978">
    <property type="term" value="P:glycogen biosynthetic process"/>
    <property type="evidence" value="ECO:0007669"/>
    <property type="project" value="UniProtKB-UniRule"/>
</dbReference>
<dbReference type="CDD" id="cd02508">
    <property type="entry name" value="ADP_Glucose_PP"/>
    <property type="match status" value="1"/>
</dbReference>
<dbReference type="CDD" id="cd04651">
    <property type="entry name" value="LbH_G1P_AT_C"/>
    <property type="match status" value="1"/>
</dbReference>
<dbReference type="Gene3D" id="2.160.10.10">
    <property type="entry name" value="Hexapeptide repeat proteins"/>
    <property type="match status" value="1"/>
</dbReference>
<dbReference type="Gene3D" id="3.90.550.10">
    <property type="entry name" value="Spore Coat Polysaccharide Biosynthesis Protein SpsA, Chain A"/>
    <property type="match status" value="1"/>
</dbReference>
<dbReference type="HAMAP" id="MF_00624">
    <property type="entry name" value="GlgC"/>
    <property type="match status" value="1"/>
</dbReference>
<dbReference type="InterPro" id="IPR011831">
    <property type="entry name" value="ADP-Glc_PPase"/>
</dbReference>
<dbReference type="InterPro" id="IPR005836">
    <property type="entry name" value="ADP_Glu_pyroP_CS"/>
</dbReference>
<dbReference type="InterPro" id="IPR023049">
    <property type="entry name" value="GlgC_bac"/>
</dbReference>
<dbReference type="InterPro" id="IPR056818">
    <property type="entry name" value="GlmU/GlgC-like_hexapep"/>
</dbReference>
<dbReference type="InterPro" id="IPR005835">
    <property type="entry name" value="NTP_transferase_dom"/>
</dbReference>
<dbReference type="InterPro" id="IPR029044">
    <property type="entry name" value="Nucleotide-diphossugar_trans"/>
</dbReference>
<dbReference type="InterPro" id="IPR011004">
    <property type="entry name" value="Trimer_LpxA-like_sf"/>
</dbReference>
<dbReference type="NCBIfam" id="TIGR02091">
    <property type="entry name" value="glgC"/>
    <property type="match status" value="1"/>
</dbReference>
<dbReference type="NCBIfam" id="NF003670">
    <property type="entry name" value="PRK05293.1"/>
    <property type="match status" value="1"/>
</dbReference>
<dbReference type="PANTHER" id="PTHR43523:SF2">
    <property type="entry name" value="GLUCOSE-1-PHOSPHATE ADENYLYLTRANSFERASE"/>
    <property type="match status" value="1"/>
</dbReference>
<dbReference type="PANTHER" id="PTHR43523">
    <property type="entry name" value="GLUCOSE-1-PHOSPHATE ADENYLYLTRANSFERASE-RELATED"/>
    <property type="match status" value="1"/>
</dbReference>
<dbReference type="Pfam" id="PF24894">
    <property type="entry name" value="Hexapep_GlmU"/>
    <property type="match status" value="1"/>
</dbReference>
<dbReference type="Pfam" id="PF00483">
    <property type="entry name" value="NTP_transferase"/>
    <property type="match status" value="1"/>
</dbReference>
<dbReference type="SUPFAM" id="SSF53448">
    <property type="entry name" value="Nucleotide-diphospho-sugar transferases"/>
    <property type="match status" value="1"/>
</dbReference>
<dbReference type="SUPFAM" id="SSF51161">
    <property type="entry name" value="Trimeric LpxA-like enzymes"/>
    <property type="match status" value="1"/>
</dbReference>
<dbReference type="PROSITE" id="PS00808">
    <property type="entry name" value="ADP_GLC_PYROPHOSPH_1"/>
    <property type="match status" value="1"/>
</dbReference>
<dbReference type="PROSITE" id="PS00809">
    <property type="entry name" value="ADP_GLC_PYROPHOSPH_2"/>
    <property type="match status" value="1"/>
</dbReference>
<dbReference type="PROSITE" id="PS00810">
    <property type="entry name" value="ADP_GLC_PYROPHOSPH_3"/>
    <property type="match status" value="1"/>
</dbReference>
<evidence type="ECO:0000255" key="1">
    <source>
        <dbReference type="HAMAP-Rule" id="MF_00624"/>
    </source>
</evidence>
<accession>Q8DPS5</accession>
<protein>
    <recommendedName>
        <fullName evidence="1">Glucose-1-phosphate adenylyltransferase</fullName>
        <ecNumber evidence="1">2.7.7.27</ecNumber>
    </recommendedName>
    <alternativeName>
        <fullName evidence="1">ADP-glucose pyrophosphorylase</fullName>
        <shortName evidence="1">ADPGlc PPase</shortName>
    </alternativeName>
    <alternativeName>
        <fullName evidence="1">ADP-glucose synthase</fullName>
    </alternativeName>
</protein>
<organism>
    <name type="scientific">Streptococcus pneumoniae (strain ATCC BAA-255 / R6)</name>
    <dbReference type="NCBI Taxonomy" id="171101"/>
    <lineage>
        <taxon>Bacteria</taxon>
        <taxon>Bacillati</taxon>
        <taxon>Bacillota</taxon>
        <taxon>Bacilli</taxon>
        <taxon>Lactobacillales</taxon>
        <taxon>Streptococcaceae</taxon>
        <taxon>Streptococcus</taxon>
    </lineage>
</organism>
<keyword id="KW-0067">ATP-binding</keyword>
<keyword id="KW-0119">Carbohydrate metabolism</keyword>
<keyword id="KW-0320">Glycogen biosynthesis</keyword>
<keyword id="KW-0321">Glycogen metabolism</keyword>
<keyword id="KW-0547">Nucleotide-binding</keyword>
<keyword id="KW-0548">Nucleotidyltransferase</keyword>
<keyword id="KW-1185">Reference proteome</keyword>
<keyword id="KW-0808">Transferase</keyword>
<reference key="1">
    <citation type="journal article" date="2001" name="J. Bacteriol.">
        <title>Genome of the bacterium Streptococcus pneumoniae strain R6.</title>
        <authorList>
            <person name="Hoskins J."/>
            <person name="Alborn W.E. Jr."/>
            <person name="Arnold J."/>
            <person name="Blaszczak L.C."/>
            <person name="Burgett S."/>
            <person name="DeHoff B.S."/>
            <person name="Estrem S.T."/>
            <person name="Fritz L."/>
            <person name="Fu D.-J."/>
            <person name="Fuller W."/>
            <person name="Geringer C."/>
            <person name="Gilmour R."/>
            <person name="Glass J.S."/>
            <person name="Khoja H."/>
            <person name="Kraft A.R."/>
            <person name="Lagace R.E."/>
            <person name="LeBlanc D.J."/>
            <person name="Lee L.N."/>
            <person name="Lefkowitz E.J."/>
            <person name="Lu J."/>
            <person name="Matsushima P."/>
            <person name="McAhren S.M."/>
            <person name="McHenney M."/>
            <person name="McLeaster K."/>
            <person name="Mundy C.W."/>
            <person name="Nicas T.I."/>
            <person name="Norris F.H."/>
            <person name="O'Gara M."/>
            <person name="Peery R.B."/>
            <person name="Robertson G.T."/>
            <person name="Rockey P."/>
            <person name="Sun P.-M."/>
            <person name="Winkler M.E."/>
            <person name="Yang Y."/>
            <person name="Young-Bellido M."/>
            <person name="Zhao G."/>
            <person name="Zook C.A."/>
            <person name="Baltz R.H."/>
            <person name="Jaskunas S.R."/>
            <person name="Rosteck P.R. Jr."/>
            <person name="Skatrud P.L."/>
            <person name="Glass J.I."/>
        </authorList>
    </citation>
    <scope>NUCLEOTIDE SEQUENCE [LARGE SCALE GENOMIC DNA]</scope>
    <source>
        <strain>ATCC BAA-255 / R6</strain>
    </source>
</reference>